<accession>Q3AQ41</accession>
<name>AROA_CHLCH</name>
<keyword id="KW-0028">Amino-acid biosynthesis</keyword>
<keyword id="KW-0057">Aromatic amino acid biosynthesis</keyword>
<keyword id="KW-0963">Cytoplasm</keyword>
<keyword id="KW-0808">Transferase</keyword>
<reference key="1">
    <citation type="submission" date="2005-08" db="EMBL/GenBank/DDBJ databases">
        <title>Complete sequence of Chlorobium chlorochromatii CaD3.</title>
        <authorList>
            <consortium name="US DOE Joint Genome Institute"/>
            <person name="Copeland A."/>
            <person name="Lucas S."/>
            <person name="Lapidus A."/>
            <person name="Barry K."/>
            <person name="Detter J.C."/>
            <person name="Glavina T."/>
            <person name="Hammon N."/>
            <person name="Israni S."/>
            <person name="Pitluck S."/>
            <person name="Bryant D."/>
            <person name="Schmutz J."/>
            <person name="Larimer F."/>
            <person name="Land M."/>
            <person name="Kyrpides N."/>
            <person name="Ivanova N."/>
            <person name="Richardson P."/>
        </authorList>
    </citation>
    <scope>NUCLEOTIDE SEQUENCE [LARGE SCALE GENOMIC DNA]</scope>
    <source>
        <strain>CaD3</strain>
    </source>
</reference>
<gene>
    <name evidence="1" type="primary">aroA</name>
    <name type="ordered locus">Cag_1631</name>
</gene>
<protein>
    <recommendedName>
        <fullName evidence="1">3-phosphoshikimate 1-carboxyvinyltransferase</fullName>
        <ecNumber evidence="1">2.5.1.19</ecNumber>
    </recommendedName>
    <alternativeName>
        <fullName evidence="1">5-enolpyruvylshikimate-3-phosphate synthase</fullName>
        <shortName evidence="1">EPSP synthase</shortName>
        <shortName evidence="1">EPSPS</shortName>
    </alternativeName>
</protein>
<proteinExistence type="inferred from homology"/>
<sequence>MRVFRGEVTTLPPDKSISHRAAMIAALSEGTTEITNFSAGFDNQSTLGVLRNAGIVVQQEEVQGAHGRTMRRVVITSNGLWSFTPPTAPLQCNNSGSTMRMMSGILAAQPFQCTLIGDASLMKRPMKRVADPLRQMGATIELSPDGTAPIHISGTKELRSLEYRLPVASAQVKSLIAFAALHAEGETRIIEPLQSRDHTEVMLGLETIVKKDERIIVVPGQQRIAAKPFFIPADPSAACFIIALGLLARGSEIVIRDVCLNPTRAAYLDLLAEAKAGIGVDNQRVIGGEIIGDILIDNLNGIEPLHISDPQLVAFIIDEIPMLAVLSAFATGSFELHNAAELRTKESDRIEALVVNLQRLGFACEQYPDGFVVKKRTEVPQGKVTIESFDDHRIAMSFAIAAQATGEALDISDIEVVGVSFPNFFSLLEELSSEA</sequence>
<comment type="function">
    <text evidence="1">Catalyzes the transfer of the enolpyruvyl moiety of phosphoenolpyruvate (PEP) to the 5-hydroxyl of shikimate-3-phosphate (S3P) to produce enolpyruvyl shikimate-3-phosphate and inorganic phosphate.</text>
</comment>
<comment type="catalytic activity">
    <reaction evidence="1">
        <text>3-phosphoshikimate + phosphoenolpyruvate = 5-O-(1-carboxyvinyl)-3-phosphoshikimate + phosphate</text>
        <dbReference type="Rhea" id="RHEA:21256"/>
        <dbReference type="ChEBI" id="CHEBI:43474"/>
        <dbReference type="ChEBI" id="CHEBI:57701"/>
        <dbReference type="ChEBI" id="CHEBI:58702"/>
        <dbReference type="ChEBI" id="CHEBI:145989"/>
        <dbReference type="EC" id="2.5.1.19"/>
    </reaction>
    <physiologicalReaction direction="left-to-right" evidence="1">
        <dbReference type="Rhea" id="RHEA:21257"/>
    </physiologicalReaction>
</comment>
<comment type="pathway">
    <text evidence="1">Metabolic intermediate biosynthesis; chorismate biosynthesis; chorismate from D-erythrose 4-phosphate and phosphoenolpyruvate: step 6/7.</text>
</comment>
<comment type="subunit">
    <text evidence="1">Monomer.</text>
</comment>
<comment type="subcellular location">
    <subcellularLocation>
        <location evidence="1">Cytoplasm</location>
    </subcellularLocation>
</comment>
<comment type="similarity">
    <text evidence="1">Belongs to the EPSP synthase family.</text>
</comment>
<evidence type="ECO:0000255" key="1">
    <source>
        <dbReference type="HAMAP-Rule" id="MF_00210"/>
    </source>
</evidence>
<dbReference type="EC" id="2.5.1.19" evidence="1"/>
<dbReference type="EMBL" id="CP000108">
    <property type="protein sequence ID" value="ABB28884.1"/>
    <property type="molecule type" value="Genomic_DNA"/>
</dbReference>
<dbReference type="SMR" id="Q3AQ41"/>
<dbReference type="STRING" id="340177.Cag_1631"/>
<dbReference type="KEGG" id="cch:Cag_1631"/>
<dbReference type="eggNOG" id="COG0128">
    <property type="taxonomic scope" value="Bacteria"/>
</dbReference>
<dbReference type="HOGENOM" id="CLU_024321_0_1_10"/>
<dbReference type="OrthoDB" id="9809920at2"/>
<dbReference type="UniPathway" id="UPA00053">
    <property type="reaction ID" value="UER00089"/>
</dbReference>
<dbReference type="GO" id="GO:0005737">
    <property type="term" value="C:cytoplasm"/>
    <property type="evidence" value="ECO:0007669"/>
    <property type="project" value="UniProtKB-SubCell"/>
</dbReference>
<dbReference type="GO" id="GO:0003866">
    <property type="term" value="F:3-phosphoshikimate 1-carboxyvinyltransferase activity"/>
    <property type="evidence" value="ECO:0007669"/>
    <property type="project" value="UniProtKB-UniRule"/>
</dbReference>
<dbReference type="GO" id="GO:0008652">
    <property type="term" value="P:amino acid biosynthetic process"/>
    <property type="evidence" value="ECO:0007669"/>
    <property type="project" value="UniProtKB-KW"/>
</dbReference>
<dbReference type="GO" id="GO:0009073">
    <property type="term" value="P:aromatic amino acid family biosynthetic process"/>
    <property type="evidence" value="ECO:0007669"/>
    <property type="project" value="UniProtKB-KW"/>
</dbReference>
<dbReference type="GO" id="GO:0009423">
    <property type="term" value="P:chorismate biosynthetic process"/>
    <property type="evidence" value="ECO:0007669"/>
    <property type="project" value="UniProtKB-UniRule"/>
</dbReference>
<dbReference type="CDD" id="cd01556">
    <property type="entry name" value="EPSP_synthase"/>
    <property type="match status" value="1"/>
</dbReference>
<dbReference type="FunFam" id="3.65.10.10:FF:000005">
    <property type="entry name" value="3-phosphoshikimate 1-carboxyvinyltransferase"/>
    <property type="match status" value="1"/>
</dbReference>
<dbReference type="Gene3D" id="3.65.10.10">
    <property type="entry name" value="Enolpyruvate transferase domain"/>
    <property type="match status" value="2"/>
</dbReference>
<dbReference type="HAMAP" id="MF_00210">
    <property type="entry name" value="EPSP_synth"/>
    <property type="match status" value="1"/>
</dbReference>
<dbReference type="InterPro" id="IPR001986">
    <property type="entry name" value="Enolpyruvate_Tfrase_dom"/>
</dbReference>
<dbReference type="InterPro" id="IPR036968">
    <property type="entry name" value="Enolpyruvate_Tfrase_sf"/>
</dbReference>
<dbReference type="InterPro" id="IPR006264">
    <property type="entry name" value="EPSP_synthase"/>
</dbReference>
<dbReference type="InterPro" id="IPR023193">
    <property type="entry name" value="EPSP_synthase_CS"/>
</dbReference>
<dbReference type="InterPro" id="IPR013792">
    <property type="entry name" value="RNA3'P_cycl/enolpyr_Trfase_a/b"/>
</dbReference>
<dbReference type="NCBIfam" id="TIGR01356">
    <property type="entry name" value="aroA"/>
    <property type="match status" value="1"/>
</dbReference>
<dbReference type="PANTHER" id="PTHR21090">
    <property type="entry name" value="AROM/DEHYDROQUINATE SYNTHASE"/>
    <property type="match status" value="1"/>
</dbReference>
<dbReference type="PANTHER" id="PTHR21090:SF5">
    <property type="entry name" value="PENTAFUNCTIONAL AROM POLYPEPTIDE"/>
    <property type="match status" value="1"/>
</dbReference>
<dbReference type="Pfam" id="PF00275">
    <property type="entry name" value="EPSP_synthase"/>
    <property type="match status" value="1"/>
</dbReference>
<dbReference type="PIRSF" id="PIRSF000505">
    <property type="entry name" value="EPSPS"/>
    <property type="match status" value="1"/>
</dbReference>
<dbReference type="SUPFAM" id="SSF55205">
    <property type="entry name" value="EPT/RTPC-like"/>
    <property type="match status" value="1"/>
</dbReference>
<dbReference type="PROSITE" id="PS00885">
    <property type="entry name" value="EPSP_SYNTHASE_2"/>
    <property type="match status" value="1"/>
</dbReference>
<feature type="chain" id="PRO_1000099677" description="3-phosphoshikimate 1-carboxyvinyltransferase">
    <location>
        <begin position="1"/>
        <end position="435"/>
    </location>
</feature>
<feature type="active site" description="Proton acceptor" evidence="1">
    <location>
        <position position="318"/>
    </location>
</feature>
<feature type="binding site" evidence="1">
    <location>
        <position position="15"/>
    </location>
    <ligand>
        <name>3-phosphoshikimate</name>
        <dbReference type="ChEBI" id="CHEBI:145989"/>
    </ligand>
</feature>
<feature type="binding site" evidence="1">
    <location>
        <position position="15"/>
    </location>
    <ligand>
        <name>phosphoenolpyruvate</name>
        <dbReference type="ChEBI" id="CHEBI:58702"/>
    </ligand>
</feature>
<feature type="binding site" evidence="1">
    <location>
        <position position="16"/>
    </location>
    <ligand>
        <name>3-phosphoshikimate</name>
        <dbReference type="ChEBI" id="CHEBI:145989"/>
    </ligand>
</feature>
<feature type="binding site" evidence="1">
    <location>
        <position position="20"/>
    </location>
    <ligand>
        <name>3-phosphoshikimate</name>
        <dbReference type="ChEBI" id="CHEBI:145989"/>
    </ligand>
</feature>
<feature type="binding site" evidence="1">
    <location>
        <position position="96"/>
    </location>
    <ligand>
        <name>phosphoenolpyruvate</name>
        <dbReference type="ChEBI" id="CHEBI:58702"/>
    </ligand>
</feature>
<feature type="binding site" evidence="1">
    <location>
        <position position="124"/>
    </location>
    <ligand>
        <name>phosphoenolpyruvate</name>
        <dbReference type="ChEBI" id="CHEBI:58702"/>
    </ligand>
</feature>
<feature type="binding site" evidence="1">
    <location>
        <position position="169"/>
    </location>
    <ligand>
        <name>3-phosphoshikimate</name>
        <dbReference type="ChEBI" id="CHEBI:145989"/>
    </ligand>
</feature>
<feature type="binding site" evidence="1">
    <location>
        <position position="171"/>
    </location>
    <ligand>
        <name>3-phosphoshikimate</name>
        <dbReference type="ChEBI" id="CHEBI:145989"/>
    </ligand>
</feature>
<feature type="binding site" evidence="1">
    <location>
        <position position="171"/>
    </location>
    <ligand>
        <name>phosphoenolpyruvate</name>
        <dbReference type="ChEBI" id="CHEBI:58702"/>
    </ligand>
</feature>
<feature type="binding site" evidence="1">
    <location>
        <position position="195"/>
    </location>
    <ligand>
        <name>3-phosphoshikimate</name>
        <dbReference type="ChEBI" id="CHEBI:145989"/>
    </ligand>
</feature>
<feature type="binding site" evidence="1">
    <location>
        <position position="318"/>
    </location>
    <ligand>
        <name>3-phosphoshikimate</name>
        <dbReference type="ChEBI" id="CHEBI:145989"/>
    </ligand>
</feature>
<feature type="binding site" evidence="1">
    <location>
        <position position="345"/>
    </location>
    <ligand>
        <name>3-phosphoshikimate</name>
        <dbReference type="ChEBI" id="CHEBI:145989"/>
    </ligand>
</feature>
<feature type="binding site" evidence="1">
    <location>
        <position position="349"/>
    </location>
    <ligand>
        <name>phosphoenolpyruvate</name>
        <dbReference type="ChEBI" id="CHEBI:58702"/>
    </ligand>
</feature>
<feature type="binding site" evidence="1">
    <location>
        <position position="393"/>
    </location>
    <ligand>
        <name>phosphoenolpyruvate</name>
        <dbReference type="ChEBI" id="CHEBI:58702"/>
    </ligand>
</feature>
<organism>
    <name type="scientific">Chlorobium chlorochromatii (strain CaD3)</name>
    <dbReference type="NCBI Taxonomy" id="340177"/>
    <lineage>
        <taxon>Bacteria</taxon>
        <taxon>Pseudomonadati</taxon>
        <taxon>Chlorobiota</taxon>
        <taxon>Chlorobiia</taxon>
        <taxon>Chlorobiales</taxon>
        <taxon>Chlorobiaceae</taxon>
        <taxon>Chlorobium/Pelodictyon group</taxon>
        <taxon>Chlorobium</taxon>
    </lineage>
</organism>